<gene>
    <name evidence="1" type="primary">GTF1</name>
    <name type="ORF">CAWG_06008</name>
</gene>
<accession>C4YKK2</accession>
<proteinExistence type="inferred from homology"/>
<organism>
    <name type="scientific">Candida albicans (strain WO-1)</name>
    <name type="common">Yeast</name>
    <dbReference type="NCBI Taxonomy" id="294748"/>
    <lineage>
        <taxon>Eukaryota</taxon>
        <taxon>Fungi</taxon>
        <taxon>Dikarya</taxon>
        <taxon>Ascomycota</taxon>
        <taxon>Saccharomycotina</taxon>
        <taxon>Pichiomycetes</taxon>
        <taxon>Debaryomycetaceae</taxon>
        <taxon>Candida/Lodderomyces clade</taxon>
        <taxon>Candida</taxon>
    </lineage>
</organism>
<dbReference type="EC" id="6.3.5.-" evidence="1"/>
<dbReference type="EMBL" id="CH672354">
    <property type="protein sequence ID" value="EEQ47431.1"/>
    <property type="molecule type" value="Genomic_DNA"/>
</dbReference>
<dbReference type="SMR" id="C4YKK2"/>
<dbReference type="PaxDb" id="5476-C4YKK2"/>
<dbReference type="VEuPathDB" id="FungiDB:CAWG_06008"/>
<dbReference type="HOGENOM" id="CLU_127195_0_0_1"/>
<dbReference type="OMA" id="STWSINE"/>
<dbReference type="OrthoDB" id="24656at766764"/>
<dbReference type="Proteomes" id="UP000001429">
    <property type="component" value="Chromosome 2, Supercontig 1.9"/>
</dbReference>
<dbReference type="GO" id="GO:0030956">
    <property type="term" value="C:glutamyl-tRNA(Gln) amidotransferase complex"/>
    <property type="evidence" value="ECO:0007669"/>
    <property type="project" value="UniProtKB-UniRule"/>
</dbReference>
<dbReference type="GO" id="GO:0005743">
    <property type="term" value="C:mitochondrial inner membrane"/>
    <property type="evidence" value="ECO:0007669"/>
    <property type="project" value="UniProtKB-SubCell"/>
</dbReference>
<dbReference type="GO" id="GO:0005524">
    <property type="term" value="F:ATP binding"/>
    <property type="evidence" value="ECO:0007669"/>
    <property type="project" value="UniProtKB-KW"/>
</dbReference>
<dbReference type="GO" id="GO:0050567">
    <property type="term" value="F:glutaminyl-tRNA synthase (glutamine-hydrolyzing) activity"/>
    <property type="evidence" value="ECO:0007669"/>
    <property type="project" value="UniProtKB-UniRule"/>
</dbReference>
<dbReference type="GO" id="GO:0070681">
    <property type="term" value="P:glutaminyl-tRNAGln biosynthesis via transamidation"/>
    <property type="evidence" value="ECO:0007669"/>
    <property type="project" value="UniProtKB-UniRule"/>
</dbReference>
<dbReference type="GO" id="GO:0032543">
    <property type="term" value="P:mitochondrial translation"/>
    <property type="evidence" value="ECO:0007669"/>
    <property type="project" value="UniProtKB-UniRule"/>
</dbReference>
<dbReference type="CDD" id="cd21422">
    <property type="entry name" value="GatF"/>
    <property type="match status" value="1"/>
</dbReference>
<dbReference type="HAMAP" id="MF_03151">
    <property type="entry name" value="GatF"/>
    <property type="match status" value="1"/>
</dbReference>
<dbReference type="InterPro" id="IPR027499">
    <property type="entry name" value="GatF"/>
</dbReference>
<dbReference type="Pfam" id="PF20977">
    <property type="entry name" value="GatF"/>
    <property type="match status" value="1"/>
</dbReference>
<evidence type="ECO:0000255" key="1">
    <source>
        <dbReference type="HAMAP-Rule" id="MF_03151"/>
    </source>
</evidence>
<keyword id="KW-0067">ATP-binding</keyword>
<keyword id="KW-0436">Ligase</keyword>
<keyword id="KW-0472">Membrane</keyword>
<keyword id="KW-0496">Mitochondrion</keyword>
<keyword id="KW-0999">Mitochondrion inner membrane</keyword>
<keyword id="KW-0547">Nucleotide-binding</keyword>
<keyword id="KW-0648">Protein biosynthesis</keyword>
<keyword id="KW-0809">Transit peptide</keyword>
<feature type="transit peptide" description="Mitochondrion" evidence="1">
    <location>
        <begin position="1"/>
        <end position="19"/>
    </location>
</feature>
<feature type="chain" id="PRO_0000413395" description="Glutamyl-tRNA(Gln) amidotransferase subunit F, mitochondrial">
    <location>
        <begin position="20"/>
        <end position="165"/>
    </location>
</feature>
<name>GATF_CANAW</name>
<sequence>MKSILRSTTRNLITSSRRFENLKTTEEIRNFLAESTWSINELLKSPTGSSQPEVSPEIVKKMLKLSGLNDLKDDQSVTKALNLQMMFINHLYDNDHETVTPSPKRNENNGIFRLLASDHLPQRPLELNDLLKQINELKPDPSKGEVDFTISDLQRDSFVINKRKE</sequence>
<reference key="1">
    <citation type="journal article" date="2009" name="Nature">
        <title>Evolution of pathogenicity and sexual reproduction in eight Candida genomes.</title>
        <authorList>
            <person name="Butler G."/>
            <person name="Rasmussen M.D."/>
            <person name="Lin M.F."/>
            <person name="Santos M.A.S."/>
            <person name="Sakthikumar S."/>
            <person name="Munro C.A."/>
            <person name="Rheinbay E."/>
            <person name="Grabherr M."/>
            <person name="Forche A."/>
            <person name="Reedy J.L."/>
            <person name="Agrafioti I."/>
            <person name="Arnaud M.B."/>
            <person name="Bates S."/>
            <person name="Brown A.J.P."/>
            <person name="Brunke S."/>
            <person name="Costanzo M.C."/>
            <person name="Fitzpatrick D.A."/>
            <person name="de Groot P.W.J."/>
            <person name="Harris D."/>
            <person name="Hoyer L.L."/>
            <person name="Hube B."/>
            <person name="Klis F.M."/>
            <person name="Kodira C."/>
            <person name="Lennard N."/>
            <person name="Logue M.E."/>
            <person name="Martin R."/>
            <person name="Neiman A.M."/>
            <person name="Nikolaou E."/>
            <person name="Quail M.A."/>
            <person name="Quinn J."/>
            <person name="Santos M.C."/>
            <person name="Schmitzberger F.F."/>
            <person name="Sherlock G."/>
            <person name="Shah P."/>
            <person name="Silverstein K.A.T."/>
            <person name="Skrzypek M.S."/>
            <person name="Soll D."/>
            <person name="Staggs R."/>
            <person name="Stansfield I."/>
            <person name="Stumpf M.P.H."/>
            <person name="Sudbery P.E."/>
            <person name="Srikantha T."/>
            <person name="Zeng Q."/>
            <person name="Berman J."/>
            <person name="Berriman M."/>
            <person name="Heitman J."/>
            <person name="Gow N.A.R."/>
            <person name="Lorenz M.C."/>
            <person name="Birren B.W."/>
            <person name="Kellis M."/>
            <person name="Cuomo C.A."/>
        </authorList>
    </citation>
    <scope>NUCLEOTIDE SEQUENCE [LARGE SCALE GENOMIC DNA]</scope>
    <source>
        <strain>WO-1</strain>
    </source>
</reference>
<comment type="function">
    <text evidence="1">Allows the formation of correctly charged Gln-tRNA(Gln) through the transamidation of misacylated Glu-tRNA(Gln) in the mitochondria. The reaction takes place in the presence of glutamine and ATP through an activated gamma-phospho-Glu-tRNA(Gln). Required for proper protein synthesis within the mitochondrion.</text>
</comment>
<comment type="catalytic activity">
    <reaction evidence="1">
        <text>L-glutamyl-tRNA(Gln) + L-glutamine + ATP + H2O = L-glutaminyl-tRNA(Gln) + L-glutamate + ADP + phosphate + H(+)</text>
        <dbReference type="Rhea" id="RHEA:17521"/>
        <dbReference type="Rhea" id="RHEA-COMP:9681"/>
        <dbReference type="Rhea" id="RHEA-COMP:9684"/>
        <dbReference type="ChEBI" id="CHEBI:15377"/>
        <dbReference type="ChEBI" id="CHEBI:15378"/>
        <dbReference type="ChEBI" id="CHEBI:29985"/>
        <dbReference type="ChEBI" id="CHEBI:30616"/>
        <dbReference type="ChEBI" id="CHEBI:43474"/>
        <dbReference type="ChEBI" id="CHEBI:58359"/>
        <dbReference type="ChEBI" id="CHEBI:78520"/>
        <dbReference type="ChEBI" id="CHEBI:78521"/>
        <dbReference type="ChEBI" id="CHEBI:456216"/>
    </reaction>
</comment>
<comment type="subunit">
    <text evidence="1">Subunit of the heterotrimeric GatFAB amidotransferase (AdT) complex, composed of A, B and F subunits.</text>
</comment>
<comment type="subcellular location">
    <subcellularLocation>
        <location evidence="1">Mitochondrion inner membrane</location>
        <topology evidence="1">Peripheral membrane protein</topology>
        <orientation evidence="1">Matrix side</orientation>
    </subcellularLocation>
</comment>
<comment type="similarity">
    <text evidence="1">Belongs to the GatF family.</text>
</comment>
<protein>
    <recommendedName>
        <fullName evidence="1">Glutamyl-tRNA(Gln) amidotransferase subunit F, mitochondrial</fullName>
        <shortName evidence="1">Glu-AdT subunit F</shortName>
        <ecNumber evidence="1">6.3.5.-</ecNumber>
    </recommendedName>
</protein>